<comment type="function">
    <text evidence="1">Catalyzes the ATP-dependent conversion of 7-carboxy-7-deazaguanine (CDG) to 7-cyano-7-deazaguanine (preQ(0)).</text>
</comment>
<comment type="catalytic activity">
    <reaction evidence="1">
        <text>7-carboxy-7-deazaguanine + NH4(+) + ATP = 7-cyano-7-deazaguanine + ADP + phosphate + H2O + H(+)</text>
        <dbReference type="Rhea" id="RHEA:27982"/>
        <dbReference type="ChEBI" id="CHEBI:15377"/>
        <dbReference type="ChEBI" id="CHEBI:15378"/>
        <dbReference type="ChEBI" id="CHEBI:28938"/>
        <dbReference type="ChEBI" id="CHEBI:30616"/>
        <dbReference type="ChEBI" id="CHEBI:43474"/>
        <dbReference type="ChEBI" id="CHEBI:45075"/>
        <dbReference type="ChEBI" id="CHEBI:61036"/>
        <dbReference type="ChEBI" id="CHEBI:456216"/>
        <dbReference type="EC" id="6.3.4.20"/>
    </reaction>
</comment>
<comment type="cofactor">
    <cofactor evidence="1">
        <name>Zn(2+)</name>
        <dbReference type="ChEBI" id="CHEBI:29105"/>
    </cofactor>
    <text evidence="1">Binds 1 zinc ion per subunit.</text>
</comment>
<comment type="pathway">
    <text evidence="1">Purine metabolism; 7-cyano-7-deazaguanine biosynthesis.</text>
</comment>
<comment type="similarity">
    <text evidence="1">Belongs to the QueC family.</text>
</comment>
<accession>Q9CP69</accession>
<name>QUEC_PASMU</name>
<gene>
    <name evidence="1" type="primary">queC</name>
    <name type="ordered locus">PM0186</name>
</gene>
<reference key="1">
    <citation type="journal article" date="2001" name="Proc. Natl. Acad. Sci. U.S.A.">
        <title>Complete genomic sequence of Pasteurella multocida Pm70.</title>
        <authorList>
            <person name="May B.J."/>
            <person name="Zhang Q."/>
            <person name="Li L.L."/>
            <person name="Paustian M.L."/>
            <person name="Whittam T.S."/>
            <person name="Kapur V."/>
        </authorList>
    </citation>
    <scope>NUCLEOTIDE SEQUENCE [LARGE SCALE GENOMIC DNA]</scope>
    <source>
        <strain>Pm70</strain>
    </source>
</reference>
<dbReference type="EC" id="6.3.4.20" evidence="1"/>
<dbReference type="EMBL" id="AE004439">
    <property type="protein sequence ID" value="AAK02270.1"/>
    <property type="molecule type" value="Genomic_DNA"/>
</dbReference>
<dbReference type="RefSeq" id="WP_010906517.1">
    <property type="nucleotide sequence ID" value="NC_002663.1"/>
</dbReference>
<dbReference type="SMR" id="Q9CP69"/>
<dbReference type="STRING" id="272843.PM0186"/>
<dbReference type="EnsemblBacteria" id="AAK02270">
    <property type="protein sequence ID" value="AAK02270"/>
    <property type="gene ID" value="PM0186"/>
</dbReference>
<dbReference type="KEGG" id="pmu:PM0186"/>
<dbReference type="PATRIC" id="fig|272843.6.peg.191"/>
<dbReference type="HOGENOM" id="CLU_081854_0_0_6"/>
<dbReference type="OrthoDB" id="9789567at2"/>
<dbReference type="UniPathway" id="UPA00391"/>
<dbReference type="Proteomes" id="UP000000809">
    <property type="component" value="Chromosome"/>
</dbReference>
<dbReference type="GO" id="GO:0005524">
    <property type="term" value="F:ATP binding"/>
    <property type="evidence" value="ECO:0007669"/>
    <property type="project" value="UniProtKB-UniRule"/>
</dbReference>
<dbReference type="GO" id="GO:0016879">
    <property type="term" value="F:ligase activity, forming carbon-nitrogen bonds"/>
    <property type="evidence" value="ECO:0007669"/>
    <property type="project" value="UniProtKB-UniRule"/>
</dbReference>
<dbReference type="GO" id="GO:0008270">
    <property type="term" value="F:zinc ion binding"/>
    <property type="evidence" value="ECO:0007669"/>
    <property type="project" value="UniProtKB-UniRule"/>
</dbReference>
<dbReference type="GO" id="GO:0008616">
    <property type="term" value="P:queuosine biosynthetic process"/>
    <property type="evidence" value="ECO:0007669"/>
    <property type="project" value="UniProtKB-UniRule"/>
</dbReference>
<dbReference type="CDD" id="cd01995">
    <property type="entry name" value="QueC-like"/>
    <property type="match status" value="1"/>
</dbReference>
<dbReference type="Gene3D" id="3.40.50.620">
    <property type="entry name" value="HUPs"/>
    <property type="match status" value="1"/>
</dbReference>
<dbReference type="HAMAP" id="MF_01633">
    <property type="entry name" value="QueC"/>
    <property type="match status" value="1"/>
</dbReference>
<dbReference type="InterPro" id="IPR018317">
    <property type="entry name" value="QueC"/>
</dbReference>
<dbReference type="InterPro" id="IPR014729">
    <property type="entry name" value="Rossmann-like_a/b/a_fold"/>
</dbReference>
<dbReference type="NCBIfam" id="TIGR00364">
    <property type="entry name" value="7-cyano-7-deazaguanine synthase QueC"/>
    <property type="match status" value="1"/>
</dbReference>
<dbReference type="PANTHER" id="PTHR42914">
    <property type="entry name" value="7-CYANO-7-DEAZAGUANINE SYNTHASE"/>
    <property type="match status" value="1"/>
</dbReference>
<dbReference type="PANTHER" id="PTHR42914:SF1">
    <property type="entry name" value="7-CYANO-7-DEAZAGUANINE SYNTHASE"/>
    <property type="match status" value="1"/>
</dbReference>
<dbReference type="Pfam" id="PF06508">
    <property type="entry name" value="QueC"/>
    <property type="match status" value="1"/>
</dbReference>
<dbReference type="PIRSF" id="PIRSF006293">
    <property type="entry name" value="ExsB"/>
    <property type="match status" value="1"/>
</dbReference>
<dbReference type="SUPFAM" id="SSF52402">
    <property type="entry name" value="Adenine nucleotide alpha hydrolases-like"/>
    <property type="match status" value="1"/>
</dbReference>
<proteinExistence type="inferred from homology"/>
<organism>
    <name type="scientific">Pasteurella multocida (strain Pm70)</name>
    <dbReference type="NCBI Taxonomy" id="272843"/>
    <lineage>
        <taxon>Bacteria</taxon>
        <taxon>Pseudomonadati</taxon>
        <taxon>Pseudomonadota</taxon>
        <taxon>Gammaproteobacteria</taxon>
        <taxon>Pasteurellales</taxon>
        <taxon>Pasteurellaceae</taxon>
        <taxon>Pasteurella</taxon>
    </lineage>
</organism>
<evidence type="ECO:0000255" key="1">
    <source>
        <dbReference type="HAMAP-Rule" id="MF_01633"/>
    </source>
</evidence>
<feature type="chain" id="PRO_0000246872" description="7-cyano-7-deazaguanine synthase">
    <location>
        <begin position="1"/>
        <end position="228"/>
    </location>
</feature>
<feature type="binding site" evidence="1">
    <location>
        <begin position="16"/>
        <end position="26"/>
    </location>
    <ligand>
        <name>ATP</name>
        <dbReference type="ChEBI" id="CHEBI:30616"/>
    </ligand>
</feature>
<feature type="binding site" evidence="1">
    <location>
        <position position="193"/>
    </location>
    <ligand>
        <name>Zn(2+)</name>
        <dbReference type="ChEBI" id="CHEBI:29105"/>
    </ligand>
</feature>
<feature type="binding site" evidence="1">
    <location>
        <position position="201"/>
    </location>
    <ligand>
        <name>Zn(2+)</name>
        <dbReference type="ChEBI" id="CHEBI:29105"/>
    </ligand>
</feature>
<feature type="binding site" evidence="1">
    <location>
        <position position="204"/>
    </location>
    <ligand>
        <name>Zn(2+)</name>
        <dbReference type="ChEBI" id="CHEBI:29105"/>
    </ligand>
</feature>
<feature type="binding site" evidence="1">
    <location>
        <position position="207"/>
    </location>
    <ligand>
        <name>Zn(2+)</name>
        <dbReference type="ChEBI" id="CHEBI:29105"/>
    </ligand>
</feature>
<keyword id="KW-0067">ATP-binding</keyword>
<keyword id="KW-0436">Ligase</keyword>
<keyword id="KW-0479">Metal-binding</keyword>
<keyword id="KW-0547">Nucleotide-binding</keyword>
<keyword id="KW-0671">Queuosine biosynthesis</keyword>
<keyword id="KW-1185">Reference proteome</keyword>
<keyword id="KW-0862">Zinc</keyword>
<sequence>MQLTNPNRDRKAVVIFSGGQDSTTCLFQAIQDYGVENVEVVTFQYGQRHAIELEKAKWIAQDLGVKQTLIDTSVIKAITQNALMDEQARIEQHGSTPNTFVDGRNALFLLYTAIYAKGQGIQDIITGVCETDFSGYPDCRDVFIKSMNVTLNLAMDYQFHLKTPLMYLTKAQTWQLADELGVLDYIRQHTHTCYMGVEQGCGECPSCVLREKGLREYLSSKSEAEIDV</sequence>
<protein>
    <recommendedName>
        <fullName evidence="1">7-cyano-7-deazaguanine synthase</fullName>
        <ecNumber evidence="1">6.3.4.20</ecNumber>
    </recommendedName>
    <alternativeName>
        <fullName evidence="1">7-cyano-7-carbaguanine synthase</fullName>
    </alternativeName>
    <alternativeName>
        <fullName evidence="1">PreQ(0) synthase</fullName>
    </alternativeName>
    <alternativeName>
        <fullName evidence="1">Queuosine biosynthesis protein QueC</fullName>
    </alternativeName>
</protein>